<feature type="chain" id="PRO_0000074563" description="[Ribosomal protein bS18]-alanine N-acetyltransferase">
    <location>
        <begin position="1"/>
        <end position="148"/>
    </location>
</feature>
<feature type="domain" description="N-acetyltransferase" evidence="1">
    <location>
        <begin position="2"/>
        <end position="147"/>
    </location>
</feature>
<feature type="active site" description="Proton acceptor" evidence="1">
    <location>
        <position position="103"/>
    </location>
</feature>
<feature type="active site" description="Proton donor" evidence="1">
    <location>
        <position position="115"/>
    </location>
</feature>
<feature type="binding site" evidence="1">
    <location>
        <begin position="69"/>
        <end position="71"/>
    </location>
    <ligand>
        <name>acetyl-CoA</name>
        <dbReference type="ChEBI" id="CHEBI:57288"/>
    </ligand>
</feature>
<feature type="binding site" evidence="1">
    <location>
        <position position="108"/>
    </location>
    <ligand>
        <name>acetyl-CoA</name>
        <dbReference type="ChEBI" id="CHEBI:57288"/>
    </ligand>
</feature>
<sequence>MNTISSLETTDLPAAYHIEQRAHAFPWSEKTFASNQGERYLNFQLTQNGKMAAFAITQVVLDEATLFNIAVDPDYQRQGLGRALLEHLIDELEKRGVATLWLEVRASNAAAIALYESLGFNEATIRRNYYPTTDGREDAIIMALPISM</sequence>
<reference key="1">
    <citation type="journal article" date="2002" name="Proc. Natl. Acad. Sci. U.S.A.">
        <title>Extensive mosaic structure revealed by the complete genome sequence of uropathogenic Escherichia coli.</title>
        <authorList>
            <person name="Welch R.A."/>
            <person name="Burland V."/>
            <person name="Plunkett G. III"/>
            <person name="Redford P."/>
            <person name="Roesch P."/>
            <person name="Rasko D."/>
            <person name="Buckles E.L."/>
            <person name="Liou S.-R."/>
            <person name="Boutin A."/>
            <person name="Hackett J."/>
            <person name="Stroud D."/>
            <person name="Mayhew G.F."/>
            <person name="Rose D.J."/>
            <person name="Zhou S."/>
            <person name="Schwartz D.C."/>
            <person name="Perna N.T."/>
            <person name="Mobley H.L.T."/>
            <person name="Donnenberg M.S."/>
            <person name="Blattner F.R."/>
        </authorList>
    </citation>
    <scope>NUCLEOTIDE SEQUENCE [LARGE SCALE GENOMIC DNA]</scope>
    <source>
        <strain>CFT073 / ATCC 700928 / UPEC</strain>
    </source>
</reference>
<accession>P0A945</accession>
<accession>P09453</accession>
<comment type="function">
    <text evidence="1">Acetylates the N-terminal alanine of ribosomal protein bS18.</text>
</comment>
<comment type="catalytic activity">
    <reaction evidence="1">
        <text>N-terminal L-alanyl-[ribosomal protein bS18] + acetyl-CoA = N-terminal N(alpha)-acetyl-L-alanyl-[ribosomal protein bS18] + CoA + H(+)</text>
        <dbReference type="Rhea" id="RHEA:43756"/>
        <dbReference type="Rhea" id="RHEA-COMP:10676"/>
        <dbReference type="Rhea" id="RHEA-COMP:10677"/>
        <dbReference type="ChEBI" id="CHEBI:15378"/>
        <dbReference type="ChEBI" id="CHEBI:57287"/>
        <dbReference type="ChEBI" id="CHEBI:57288"/>
        <dbReference type="ChEBI" id="CHEBI:64718"/>
        <dbReference type="ChEBI" id="CHEBI:83683"/>
        <dbReference type="EC" id="2.3.1.266"/>
    </reaction>
</comment>
<comment type="subcellular location">
    <subcellularLocation>
        <location evidence="1">Cytoplasm</location>
    </subcellularLocation>
</comment>
<comment type="similarity">
    <text evidence="1 2">Belongs to the acetyltransferase family. RimI subfamily.</text>
</comment>
<name>RIMI_ECOL6</name>
<keyword id="KW-0012">Acyltransferase</keyword>
<keyword id="KW-0963">Cytoplasm</keyword>
<keyword id="KW-1185">Reference proteome</keyword>
<keyword id="KW-0808">Transferase</keyword>
<evidence type="ECO:0000255" key="1">
    <source>
        <dbReference type="HAMAP-Rule" id="MF_02210"/>
    </source>
</evidence>
<evidence type="ECO:0000305" key="2"/>
<protein>
    <recommendedName>
        <fullName evidence="1">[Ribosomal protein bS18]-alanine N-acetyltransferase</fullName>
        <ecNumber evidence="1">2.3.1.266</ecNumber>
    </recommendedName>
</protein>
<proteinExistence type="inferred from homology"/>
<organism>
    <name type="scientific">Escherichia coli O6:H1 (strain CFT073 / ATCC 700928 / UPEC)</name>
    <dbReference type="NCBI Taxonomy" id="199310"/>
    <lineage>
        <taxon>Bacteria</taxon>
        <taxon>Pseudomonadati</taxon>
        <taxon>Pseudomonadota</taxon>
        <taxon>Gammaproteobacteria</taxon>
        <taxon>Enterobacterales</taxon>
        <taxon>Enterobacteriaceae</taxon>
        <taxon>Escherichia</taxon>
    </lineage>
</organism>
<gene>
    <name evidence="1" type="primary">rimI</name>
    <name type="ordered locus">c5453</name>
</gene>
<dbReference type="EC" id="2.3.1.266" evidence="1"/>
<dbReference type="EMBL" id="AE014075">
    <property type="protein sequence ID" value="AAN83873.1"/>
    <property type="molecule type" value="Genomic_DNA"/>
</dbReference>
<dbReference type="RefSeq" id="WP_001092461.1">
    <property type="nucleotide sequence ID" value="NZ_CP051263.1"/>
</dbReference>
<dbReference type="SMR" id="P0A945"/>
<dbReference type="STRING" id="199310.c5453"/>
<dbReference type="GeneID" id="75202945"/>
<dbReference type="KEGG" id="ecc:c5453"/>
<dbReference type="eggNOG" id="COG0456">
    <property type="taxonomic scope" value="Bacteria"/>
</dbReference>
<dbReference type="HOGENOM" id="CLU_013985_23_2_6"/>
<dbReference type="BioCyc" id="ECOL199310:C5453-MONOMER"/>
<dbReference type="Proteomes" id="UP000001410">
    <property type="component" value="Chromosome"/>
</dbReference>
<dbReference type="GO" id="GO:0005737">
    <property type="term" value="C:cytoplasm"/>
    <property type="evidence" value="ECO:0007669"/>
    <property type="project" value="UniProtKB-SubCell"/>
</dbReference>
<dbReference type="GO" id="GO:0008999">
    <property type="term" value="F:protein-N-terminal-alanine acetyltransferase activity"/>
    <property type="evidence" value="ECO:0007669"/>
    <property type="project" value="UniProtKB-UniRule"/>
</dbReference>
<dbReference type="CDD" id="cd04301">
    <property type="entry name" value="NAT_SF"/>
    <property type="match status" value="1"/>
</dbReference>
<dbReference type="FunFam" id="3.40.630.30:FF:000018">
    <property type="entry name" value="[Ribosomal protein S18]-alanine N-acetyltransferase"/>
    <property type="match status" value="1"/>
</dbReference>
<dbReference type="Gene3D" id="3.40.630.30">
    <property type="match status" value="1"/>
</dbReference>
<dbReference type="HAMAP" id="MF_02210">
    <property type="entry name" value="RimI"/>
    <property type="match status" value="1"/>
</dbReference>
<dbReference type="InterPro" id="IPR006464">
    <property type="entry name" value="AcTrfase_RimI/Ard1"/>
</dbReference>
<dbReference type="InterPro" id="IPR016181">
    <property type="entry name" value="Acyl_CoA_acyltransferase"/>
</dbReference>
<dbReference type="InterPro" id="IPR000182">
    <property type="entry name" value="GNAT_dom"/>
</dbReference>
<dbReference type="InterPro" id="IPR043690">
    <property type="entry name" value="RimI"/>
</dbReference>
<dbReference type="InterPro" id="IPR050680">
    <property type="entry name" value="YpeA/RimI_acetyltransf"/>
</dbReference>
<dbReference type="NCBIfam" id="NF007025">
    <property type="entry name" value="PRK09491.1"/>
    <property type="match status" value="1"/>
</dbReference>
<dbReference type="NCBIfam" id="TIGR01575">
    <property type="entry name" value="rimI"/>
    <property type="match status" value="1"/>
</dbReference>
<dbReference type="PANTHER" id="PTHR43420">
    <property type="entry name" value="ACETYLTRANSFERASE"/>
    <property type="match status" value="1"/>
</dbReference>
<dbReference type="PANTHER" id="PTHR43420:SF51">
    <property type="entry name" value="PEPTIDYL-LYSINE N-ACETYLTRANSFERASE YIAC"/>
    <property type="match status" value="1"/>
</dbReference>
<dbReference type="Pfam" id="PF00583">
    <property type="entry name" value="Acetyltransf_1"/>
    <property type="match status" value="1"/>
</dbReference>
<dbReference type="SUPFAM" id="SSF55729">
    <property type="entry name" value="Acyl-CoA N-acyltransferases (Nat)"/>
    <property type="match status" value="1"/>
</dbReference>
<dbReference type="PROSITE" id="PS51186">
    <property type="entry name" value="GNAT"/>
    <property type="match status" value="1"/>
</dbReference>